<reference key="1">
    <citation type="journal article" date="2001" name="Nature">
        <title>Genome sequence of enterohaemorrhagic Escherichia coli O157:H7.</title>
        <authorList>
            <person name="Perna N.T."/>
            <person name="Plunkett G. III"/>
            <person name="Burland V."/>
            <person name="Mau B."/>
            <person name="Glasner J.D."/>
            <person name="Rose D.J."/>
            <person name="Mayhew G.F."/>
            <person name="Evans P.S."/>
            <person name="Gregor J."/>
            <person name="Kirkpatrick H.A."/>
            <person name="Posfai G."/>
            <person name="Hackett J."/>
            <person name="Klink S."/>
            <person name="Boutin A."/>
            <person name="Shao Y."/>
            <person name="Miller L."/>
            <person name="Grotbeck E.J."/>
            <person name="Davis N.W."/>
            <person name="Lim A."/>
            <person name="Dimalanta E.T."/>
            <person name="Potamousis K."/>
            <person name="Apodaca J."/>
            <person name="Anantharaman T.S."/>
            <person name="Lin J."/>
            <person name="Yen G."/>
            <person name="Schwartz D.C."/>
            <person name="Welch R.A."/>
            <person name="Blattner F.R."/>
        </authorList>
    </citation>
    <scope>NUCLEOTIDE SEQUENCE [LARGE SCALE GENOMIC DNA]</scope>
    <source>
        <strain>O157:H7 / EDL933 / ATCC 700927 / EHEC</strain>
    </source>
</reference>
<reference key="2">
    <citation type="journal article" date="2001" name="DNA Res.">
        <title>Complete genome sequence of enterohemorrhagic Escherichia coli O157:H7 and genomic comparison with a laboratory strain K-12.</title>
        <authorList>
            <person name="Hayashi T."/>
            <person name="Makino K."/>
            <person name="Ohnishi M."/>
            <person name="Kurokawa K."/>
            <person name="Ishii K."/>
            <person name="Yokoyama K."/>
            <person name="Han C.-G."/>
            <person name="Ohtsubo E."/>
            <person name="Nakayama K."/>
            <person name="Murata T."/>
            <person name="Tanaka M."/>
            <person name="Tobe T."/>
            <person name="Iida T."/>
            <person name="Takami H."/>
            <person name="Honda T."/>
            <person name="Sasakawa C."/>
            <person name="Ogasawara N."/>
            <person name="Yasunaga T."/>
            <person name="Kuhara S."/>
            <person name="Shiba T."/>
            <person name="Hattori M."/>
            <person name="Shinagawa H."/>
        </authorList>
    </citation>
    <scope>NUCLEOTIDE SEQUENCE [LARGE SCALE GENOMIC DNA]</scope>
    <source>
        <strain>O157:H7 / Sakai / RIMD 0509952 / EHEC</strain>
    </source>
</reference>
<organism>
    <name type="scientific">Escherichia coli O157:H7</name>
    <dbReference type="NCBI Taxonomy" id="83334"/>
    <lineage>
        <taxon>Bacteria</taxon>
        <taxon>Pseudomonadati</taxon>
        <taxon>Pseudomonadota</taxon>
        <taxon>Gammaproteobacteria</taxon>
        <taxon>Enterobacterales</taxon>
        <taxon>Enterobacteriaceae</taxon>
        <taxon>Escherichia</taxon>
    </lineage>
</organism>
<evidence type="ECO:0000250" key="1">
    <source>
        <dbReference type="UniProtKB" id="P0AC47"/>
    </source>
</evidence>
<evidence type="ECO:0000255" key="2">
    <source>
        <dbReference type="PROSITE-ProRule" id="PRU00465"/>
    </source>
</evidence>
<evidence type="ECO:0000255" key="3">
    <source>
        <dbReference type="PROSITE-ProRule" id="PRU00711"/>
    </source>
</evidence>
<evidence type="ECO:0000305" key="4"/>
<name>FRDB_ECO57</name>
<gene>
    <name type="primary">frdB</name>
    <name type="ordered locus">Z5760</name>
    <name type="ordered locus">ECs5134</name>
</gene>
<feature type="initiator methionine" description="Removed" evidence="1">
    <location>
        <position position="1"/>
    </location>
</feature>
<feature type="chain" id="PRO_0000158699" description="Fumarate reductase iron-sulfur subunit">
    <location>
        <begin position="2"/>
        <end position="244"/>
    </location>
</feature>
<feature type="domain" description="2Fe-2S ferredoxin-type" evidence="2">
    <location>
        <begin position="16"/>
        <end position="97"/>
    </location>
</feature>
<feature type="domain" description="4Fe-4S ferredoxin-type" evidence="3">
    <location>
        <begin position="140"/>
        <end position="169"/>
    </location>
</feature>
<feature type="binding site" evidence="1">
    <location>
        <position position="14"/>
    </location>
    <ligand>
        <name>a menaquinone</name>
        <dbReference type="ChEBI" id="CHEBI:16374"/>
    </ligand>
</feature>
<feature type="binding site" evidence="1">
    <location>
        <position position="58"/>
    </location>
    <ligand>
        <name>[2Fe-2S] cluster</name>
        <dbReference type="ChEBI" id="CHEBI:190135"/>
    </ligand>
</feature>
<feature type="binding site" evidence="1">
    <location>
        <position position="63"/>
    </location>
    <ligand>
        <name>[2Fe-2S] cluster</name>
        <dbReference type="ChEBI" id="CHEBI:190135"/>
    </ligand>
</feature>
<feature type="binding site" evidence="1">
    <location>
        <position position="66"/>
    </location>
    <ligand>
        <name>[2Fe-2S] cluster</name>
        <dbReference type="ChEBI" id="CHEBI:190135"/>
    </ligand>
</feature>
<feature type="binding site" evidence="1">
    <location>
        <position position="78"/>
    </location>
    <ligand>
        <name>[2Fe-2S] cluster</name>
        <dbReference type="ChEBI" id="CHEBI:190135"/>
    </ligand>
</feature>
<feature type="binding site" evidence="1">
    <location>
        <position position="149"/>
    </location>
    <ligand>
        <name>[4Fe-4S] cluster</name>
        <dbReference type="ChEBI" id="CHEBI:49883"/>
    </ligand>
</feature>
<feature type="binding site" evidence="1">
    <location>
        <position position="152"/>
    </location>
    <ligand>
        <name>[4Fe-4S] cluster</name>
        <dbReference type="ChEBI" id="CHEBI:49883"/>
    </ligand>
</feature>
<feature type="binding site" evidence="1">
    <location>
        <position position="155"/>
    </location>
    <ligand>
        <name>[4Fe-4S] cluster</name>
        <dbReference type="ChEBI" id="CHEBI:49883"/>
    </ligand>
</feature>
<feature type="binding site" evidence="1">
    <location>
        <position position="159"/>
    </location>
    <ligand>
        <name>[3Fe-4S] cluster</name>
        <dbReference type="ChEBI" id="CHEBI:21137"/>
    </ligand>
</feature>
<feature type="binding site" evidence="1">
    <location>
        <position position="205"/>
    </location>
    <ligand>
        <name>[3Fe-4S] cluster</name>
        <dbReference type="ChEBI" id="CHEBI:21137"/>
    </ligand>
</feature>
<feature type="binding site" evidence="1">
    <location>
        <position position="211"/>
    </location>
    <ligand>
        <name>[3Fe-4S] cluster</name>
        <dbReference type="ChEBI" id="CHEBI:21137"/>
    </ligand>
</feature>
<feature type="binding site" evidence="1">
    <location>
        <position position="215"/>
    </location>
    <ligand>
        <name>[4Fe-4S] cluster</name>
        <dbReference type="ChEBI" id="CHEBI:49883"/>
    </ligand>
</feature>
<feature type="binding site" evidence="1">
    <location>
        <begin position="226"/>
        <end position="229"/>
    </location>
    <ligand>
        <name>a menaquinone</name>
        <dbReference type="ChEBI" id="CHEBI:16374"/>
    </ligand>
</feature>
<accession>P0AC49</accession>
<accession>P00364</accession>
<keyword id="KW-0001">2Fe-2S</keyword>
<keyword id="KW-0003">3Fe-4S</keyword>
<keyword id="KW-0004">4Fe-4S</keyword>
<keyword id="KW-0997">Cell inner membrane</keyword>
<keyword id="KW-1003">Cell membrane</keyword>
<keyword id="KW-0249">Electron transport</keyword>
<keyword id="KW-0408">Iron</keyword>
<keyword id="KW-0411">Iron-sulfur</keyword>
<keyword id="KW-0472">Membrane</keyword>
<keyword id="KW-0479">Metal-binding</keyword>
<keyword id="KW-0560">Oxidoreductase</keyword>
<keyword id="KW-1185">Reference proteome</keyword>
<keyword id="KW-0813">Transport</keyword>
<keyword id="KW-0816">Tricarboxylic acid cycle</keyword>
<comment type="function">
    <text evidence="1">Two distinct, membrane-bound, FAD-containing enzymes are responsible for the catalysis of fumarate and succinate interconversion; the fumarate reductase is used in anaerobic growth, and the succinate dehydrogenase is used in aerobic growth.</text>
</comment>
<comment type="catalytic activity">
    <reaction evidence="1">
        <text>a quinone + succinate = fumarate + a quinol</text>
        <dbReference type="Rhea" id="RHEA:40523"/>
        <dbReference type="ChEBI" id="CHEBI:24646"/>
        <dbReference type="ChEBI" id="CHEBI:29806"/>
        <dbReference type="ChEBI" id="CHEBI:30031"/>
        <dbReference type="ChEBI" id="CHEBI:132124"/>
        <dbReference type="EC" id="1.3.5.1"/>
    </reaction>
</comment>
<comment type="catalytic activity">
    <reaction evidence="1">
        <text>a menaquinone + succinate = a menaquinol + fumarate</text>
        <dbReference type="Rhea" id="RHEA:27834"/>
        <dbReference type="Rhea" id="RHEA-COMP:9537"/>
        <dbReference type="Rhea" id="RHEA-COMP:9539"/>
        <dbReference type="ChEBI" id="CHEBI:16374"/>
        <dbReference type="ChEBI" id="CHEBI:18151"/>
        <dbReference type="ChEBI" id="CHEBI:29806"/>
        <dbReference type="ChEBI" id="CHEBI:30031"/>
        <dbReference type="EC" id="1.3.5.1"/>
    </reaction>
</comment>
<comment type="cofactor">
    <cofactor evidence="1">
        <name>[2Fe-2S] cluster</name>
        <dbReference type="ChEBI" id="CHEBI:190135"/>
    </cofactor>
    <text evidence="1">Binds 1 [2Fe-2S] cluster.</text>
</comment>
<comment type="cofactor">
    <cofactor evidence="1">
        <name>[3Fe-4S] cluster</name>
        <dbReference type="ChEBI" id="CHEBI:21137"/>
    </cofactor>
    <text evidence="1">Binds 1 [3Fe-4S] cluster.</text>
</comment>
<comment type="cofactor">
    <cofactor evidence="1">
        <name>[4Fe-4S] cluster</name>
        <dbReference type="ChEBI" id="CHEBI:49883"/>
    </cofactor>
    <text evidence="1">Binds 1 [4Fe-4S] cluster.</text>
</comment>
<comment type="subunit">
    <text evidence="1">Fumarate dehydrogenase forms part of an enzyme complex containing four subunits: a flavoprotein, an iron-sulfur, and two hydrophobic anchor proteins.</text>
</comment>
<comment type="subcellular location">
    <subcellularLocation>
        <location evidence="1">Cell inner membrane</location>
        <topology evidence="1">Peripheral membrane protein</topology>
        <orientation evidence="1">Cytoplasmic side</orientation>
    </subcellularLocation>
</comment>
<comment type="similarity">
    <text evidence="4">Belongs to the succinate dehydrogenase/fumarate reductase iron-sulfur protein family.</text>
</comment>
<dbReference type="EC" id="1.3.5.1" evidence="1"/>
<dbReference type="EMBL" id="AE005174">
    <property type="protein sequence ID" value="AAG59354.1"/>
    <property type="molecule type" value="Genomic_DNA"/>
</dbReference>
<dbReference type="EMBL" id="BA000007">
    <property type="protein sequence ID" value="BAB38557.1"/>
    <property type="molecule type" value="Genomic_DNA"/>
</dbReference>
<dbReference type="PIR" id="F86111">
    <property type="entry name" value="F86111"/>
</dbReference>
<dbReference type="PIR" id="F91270">
    <property type="entry name" value="F91270"/>
</dbReference>
<dbReference type="RefSeq" id="NP_313161.1">
    <property type="nucleotide sequence ID" value="NC_002695.1"/>
</dbReference>
<dbReference type="RefSeq" id="WP_000829498.1">
    <property type="nucleotide sequence ID" value="NZ_VOAI01000008.1"/>
</dbReference>
<dbReference type="SMR" id="P0AC49"/>
<dbReference type="STRING" id="155864.Z5760"/>
<dbReference type="GeneID" id="914097"/>
<dbReference type="GeneID" id="93777669"/>
<dbReference type="KEGG" id="ece:Z5760"/>
<dbReference type="KEGG" id="ecs:ECs_5134"/>
<dbReference type="PATRIC" id="fig|386585.9.peg.5367"/>
<dbReference type="eggNOG" id="COG0479">
    <property type="taxonomic scope" value="Bacteria"/>
</dbReference>
<dbReference type="HOGENOM" id="CLU_044838_3_2_6"/>
<dbReference type="OMA" id="CPKGISL"/>
<dbReference type="Proteomes" id="UP000000558">
    <property type="component" value="Chromosome"/>
</dbReference>
<dbReference type="Proteomes" id="UP000002519">
    <property type="component" value="Chromosome"/>
</dbReference>
<dbReference type="GO" id="GO:0005886">
    <property type="term" value="C:plasma membrane"/>
    <property type="evidence" value="ECO:0007669"/>
    <property type="project" value="UniProtKB-SubCell"/>
</dbReference>
<dbReference type="GO" id="GO:0051537">
    <property type="term" value="F:2 iron, 2 sulfur cluster binding"/>
    <property type="evidence" value="ECO:0007669"/>
    <property type="project" value="UniProtKB-KW"/>
</dbReference>
<dbReference type="GO" id="GO:0051538">
    <property type="term" value="F:3 iron, 4 sulfur cluster binding"/>
    <property type="evidence" value="ECO:0007669"/>
    <property type="project" value="UniProtKB-KW"/>
</dbReference>
<dbReference type="GO" id="GO:0051539">
    <property type="term" value="F:4 iron, 4 sulfur cluster binding"/>
    <property type="evidence" value="ECO:0007669"/>
    <property type="project" value="UniProtKB-KW"/>
</dbReference>
<dbReference type="GO" id="GO:0009055">
    <property type="term" value="F:electron transfer activity"/>
    <property type="evidence" value="ECO:0007669"/>
    <property type="project" value="InterPro"/>
</dbReference>
<dbReference type="GO" id="GO:0046872">
    <property type="term" value="F:metal ion binding"/>
    <property type="evidence" value="ECO:0007669"/>
    <property type="project" value="UniProtKB-KW"/>
</dbReference>
<dbReference type="GO" id="GO:0008177">
    <property type="term" value="F:succinate dehydrogenase (quinone) activity"/>
    <property type="evidence" value="ECO:0007669"/>
    <property type="project" value="RHEA"/>
</dbReference>
<dbReference type="GO" id="GO:0009061">
    <property type="term" value="P:anaerobic respiration"/>
    <property type="evidence" value="ECO:0007669"/>
    <property type="project" value="TreeGrafter"/>
</dbReference>
<dbReference type="GO" id="GO:0006099">
    <property type="term" value="P:tricarboxylic acid cycle"/>
    <property type="evidence" value="ECO:0007669"/>
    <property type="project" value="UniProtKB-KW"/>
</dbReference>
<dbReference type="FunFam" id="1.10.1060.10:FF:000002">
    <property type="entry name" value="Succinate dehydrogenase iron-sulfur subunit"/>
    <property type="match status" value="1"/>
</dbReference>
<dbReference type="FunFam" id="3.10.20.30:FF:000009">
    <property type="entry name" value="Succinate dehydrogenase iron-sulfur subunit"/>
    <property type="match status" value="1"/>
</dbReference>
<dbReference type="Gene3D" id="3.10.20.30">
    <property type="match status" value="1"/>
</dbReference>
<dbReference type="Gene3D" id="1.10.1060.10">
    <property type="entry name" value="Alpha-helical ferredoxin"/>
    <property type="match status" value="1"/>
</dbReference>
<dbReference type="InterPro" id="IPR036010">
    <property type="entry name" value="2Fe-2S_ferredoxin-like_sf"/>
</dbReference>
<dbReference type="InterPro" id="IPR001041">
    <property type="entry name" value="2Fe-2S_ferredoxin-type"/>
</dbReference>
<dbReference type="InterPro" id="IPR006058">
    <property type="entry name" value="2Fe2S_fd_BS"/>
</dbReference>
<dbReference type="InterPro" id="IPR017896">
    <property type="entry name" value="4Fe4S_Fe-S-bd"/>
</dbReference>
<dbReference type="InterPro" id="IPR017900">
    <property type="entry name" value="4Fe4S_Fe_S_CS"/>
</dbReference>
<dbReference type="InterPro" id="IPR012675">
    <property type="entry name" value="Beta-grasp_dom_sf"/>
</dbReference>
<dbReference type="InterPro" id="IPR009051">
    <property type="entry name" value="Helical_ferredxn"/>
</dbReference>
<dbReference type="InterPro" id="IPR004489">
    <property type="entry name" value="Succ_DH/fum_Rdtase_Fe-S"/>
</dbReference>
<dbReference type="InterPro" id="IPR025192">
    <property type="entry name" value="Succ_DH/fum_Rdtase_N"/>
</dbReference>
<dbReference type="NCBIfam" id="TIGR00384">
    <property type="entry name" value="dhsB"/>
    <property type="match status" value="1"/>
</dbReference>
<dbReference type="NCBIfam" id="NF004616">
    <property type="entry name" value="PRK05950.1"/>
    <property type="match status" value="1"/>
</dbReference>
<dbReference type="NCBIfam" id="NF009051">
    <property type="entry name" value="PRK12385.1"/>
    <property type="match status" value="1"/>
</dbReference>
<dbReference type="PANTHER" id="PTHR43551">
    <property type="entry name" value="FUMARATE REDUCTASE IRON-SULFUR SUBUNIT"/>
    <property type="match status" value="1"/>
</dbReference>
<dbReference type="PANTHER" id="PTHR43551:SF2">
    <property type="entry name" value="FUMARATE REDUCTASE IRON-SULFUR SUBUNIT"/>
    <property type="match status" value="1"/>
</dbReference>
<dbReference type="Pfam" id="PF13085">
    <property type="entry name" value="Fer2_3"/>
    <property type="match status" value="1"/>
</dbReference>
<dbReference type="Pfam" id="PF13237">
    <property type="entry name" value="Fer4_10"/>
    <property type="match status" value="1"/>
</dbReference>
<dbReference type="SUPFAM" id="SSF54292">
    <property type="entry name" value="2Fe-2S ferredoxin-like"/>
    <property type="match status" value="1"/>
</dbReference>
<dbReference type="SUPFAM" id="SSF46548">
    <property type="entry name" value="alpha-helical ferredoxin"/>
    <property type="match status" value="1"/>
</dbReference>
<dbReference type="PROSITE" id="PS00197">
    <property type="entry name" value="2FE2S_FER_1"/>
    <property type="match status" value="1"/>
</dbReference>
<dbReference type="PROSITE" id="PS51085">
    <property type="entry name" value="2FE2S_FER_2"/>
    <property type="match status" value="1"/>
</dbReference>
<dbReference type="PROSITE" id="PS00198">
    <property type="entry name" value="4FE4S_FER_1"/>
    <property type="match status" value="1"/>
</dbReference>
<dbReference type="PROSITE" id="PS51379">
    <property type="entry name" value="4FE4S_FER_2"/>
    <property type="match status" value="1"/>
</dbReference>
<proteinExistence type="inferred from homology"/>
<protein>
    <recommendedName>
        <fullName>Fumarate reductase iron-sulfur subunit</fullName>
        <ecNumber evidence="1">1.3.5.1</ecNumber>
    </recommendedName>
    <alternativeName>
        <fullName>Quinol-fumarate reductase iron-sulfur subunit</fullName>
        <shortName>QFR iron-sulfur subunit</shortName>
    </alternativeName>
</protein>
<sequence>MAEMKNLKIEVVRYNPEVDTAPHSAFYEVPYDATTSLLDALGYIKDNLAPDLSYRWSCRMAICGSCGMMVNNVPKLACKTFLRDYTDGMKVEALANFPIERDLVVDMTHFIESLEAIKPYIIGNSRTADQGTNIQTPAQMAKYHQFSGCINCGLCYAACPQFGLNPEFIGPAAITLAHRYNEDSRDHGKKERMAQLNSQNGVWSCTFVGYCSEVCPKHVDPAAAIQQGKVESSKDFLIATLKPR</sequence>